<accession>B1L0G9</accession>
<feature type="chain" id="PRO_1000092303" description="N-acetylmuramic acid 6-phosphate etherase">
    <location>
        <begin position="1"/>
        <end position="302"/>
    </location>
</feature>
<feature type="domain" description="SIS" evidence="1">
    <location>
        <begin position="58"/>
        <end position="221"/>
    </location>
</feature>
<feature type="active site" description="Proton donor" evidence="1">
    <location>
        <position position="86"/>
    </location>
</feature>
<feature type="active site" evidence="1">
    <location>
        <position position="117"/>
    </location>
</feature>
<organism>
    <name type="scientific">Clostridium botulinum (strain Loch Maree / Type A3)</name>
    <dbReference type="NCBI Taxonomy" id="498214"/>
    <lineage>
        <taxon>Bacteria</taxon>
        <taxon>Bacillati</taxon>
        <taxon>Bacillota</taxon>
        <taxon>Clostridia</taxon>
        <taxon>Eubacteriales</taxon>
        <taxon>Clostridiaceae</taxon>
        <taxon>Clostridium</taxon>
    </lineage>
</organism>
<name>MURQ_CLOBM</name>
<protein>
    <recommendedName>
        <fullName evidence="1">N-acetylmuramic acid 6-phosphate etherase</fullName>
        <shortName evidence="1">MurNAc-6-P etherase</shortName>
        <ecNumber evidence="1">4.2.1.126</ecNumber>
    </recommendedName>
    <alternativeName>
        <fullName evidence="1">N-acetylmuramic acid 6-phosphate hydrolase</fullName>
    </alternativeName>
    <alternativeName>
        <fullName evidence="1">N-acetylmuramic acid 6-phosphate lyase</fullName>
    </alternativeName>
</protein>
<reference key="1">
    <citation type="journal article" date="2007" name="PLoS ONE">
        <title>Analysis of the neurotoxin complex genes in Clostridium botulinum A1-A4 and B1 strains: BoNT/A3, /Ba4 and /B1 clusters are located within plasmids.</title>
        <authorList>
            <person name="Smith T.J."/>
            <person name="Hill K.K."/>
            <person name="Foley B.T."/>
            <person name="Detter J.C."/>
            <person name="Munk A.C."/>
            <person name="Bruce D.C."/>
            <person name="Doggett N.A."/>
            <person name="Smith L.A."/>
            <person name="Marks J.D."/>
            <person name="Xie G."/>
            <person name="Brettin T.S."/>
        </authorList>
    </citation>
    <scope>NUCLEOTIDE SEQUENCE [LARGE SCALE GENOMIC DNA]</scope>
    <source>
        <strain>Loch Maree / Type A3</strain>
    </source>
</reference>
<proteinExistence type="inferred from homology"/>
<keyword id="KW-0119">Carbohydrate metabolism</keyword>
<keyword id="KW-0456">Lyase</keyword>
<gene>
    <name evidence="1" type="primary">murQ</name>
    <name type="ordered locus">CLK_0787</name>
</gene>
<evidence type="ECO:0000255" key="1">
    <source>
        <dbReference type="HAMAP-Rule" id="MF_00068"/>
    </source>
</evidence>
<comment type="function">
    <text evidence="1">Specifically catalyzes the cleavage of the D-lactyl ether substituent of MurNAc 6-phosphate, producing GlcNAc 6-phosphate and D-lactate.</text>
</comment>
<comment type="catalytic activity">
    <reaction evidence="1">
        <text>N-acetyl-D-muramate 6-phosphate + H2O = N-acetyl-D-glucosamine 6-phosphate + (R)-lactate</text>
        <dbReference type="Rhea" id="RHEA:26410"/>
        <dbReference type="ChEBI" id="CHEBI:15377"/>
        <dbReference type="ChEBI" id="CHEBI:16004"/>
        <dbReference type="ChEBI" id="CHEBI:57513"/>
        <dbReference type="ChEBI" id="CHEBI:58722"/>
        <dbReference type="EC" id="4.2.1.126"/>
    </reaction>
</comment>
<comment type="pathway">
    <text evidence="1">Amino-sugar metabolism; N-acetylmuramate degradation.</text>
</comment>
<comment type="subunit">
    <text evidence="1">Homodimer.</text>
</comment>
<comment type="miscellaneous">
    <text evidence="1">A lyase-type mechanism (elimination/hydration) is suggested for the cleavage of the lactyl ether bond of MurNAc 6-phosphate, with the formation of an alpha,beta-unsaturated aldehyde intermediate with (E)-stereochemistry, followed by the syn addition of water to give product.</text>
</comment>
<comment type="similarity">
    <text evidence="1">Belongs to the GCKR-like family. MurNAc-6-P etherase subfamily.</text>
</comment>
<sequence>MTNISLDKLVTESRNENTKNIDRVETLEMLKMINDEDKKVAEAVEKELIHIAKAVEKIGKAFLNGGRLIYVGAGTSGRLGVLDASECPPTYGVSYDLVRGIIAGGESAMFKAREGAEDSKKLCIKDLKNIDFSKNDILVGIAASGRTPYVIGGLEYANGIGATTISVTCNPESEMSKIANISIAPVVGPEAITGSTRMKAGTAQKMVLNMLSTGAMVKTGKVYGNLMVDLKATNEKLVERAKRIVMQATGAKREQVERILEETNFDVKLSIFMIESSLEKMKAKEILDKNKGYIVEAIKEIS</sequence>
<dbReference type="EC" id="4.2.1.126" evidence="1"/>
<dbReference type="EMBL" id="CP000962">
    <property type="protein sequence ID" value="ACA56212.1"/>
    <property type="molecule type" value="Genomic_DNA"/>
</dbReference>
<dbReference type="RefSeq" id="WP_012344109.1">
    <property type="nucleotide sequence ID" value="NC_010520.1"/>
</dbReference>
<dbReference type="SMR" id="B1L0G9"/>
<dbReference type="KEGG" id="cbl:CLK_0787"/>
<dbReference type="HOGENOM" id="CLU_049049_1_1_9"/>
<dbReference type="UniPathway" id="UPA00342"/>
<dbReference type="GO" id="GO:0097367">
    <property type="term" value="F:carbohydrate derivative binding"/>
    <property type="evidence" value="ECO:0007669"/>
    <property type="project" value="InterPro"/>
</dbReference>
<dbReference type="GO" id="GO:0016835">
    <property type="term" value="F:carbon-oxygen lyase activity"/>
    <property type="evidence" value="ECO:0007669"/>
    <property type="project" value="UniProtKB-UniRule"/>
</dbReference>
<dbReference type="GO" id="GO:0016803">
    <property type="term" value="F:ether hydrolase activity"/>
    <property type="evidence" value="ECO:0007669"/>
    <property type="project" value="TreeGrafter"/>
</dbReference>
<dbReference type="GO" id="GO:0046348">
    <property type="term" value="P:amino sugar catabolic process"/>
    <property type="evidence" value="ECO:0007669"/>
    <property type="project" value="InterPro"/>
</dbReference>
<dbReference type="GO" id="GO:0097173">
    <property type="term" value="P:N-acetylmuramic acid catabolic process"/>
    <property type="evidence" value="ECO:0007669"/>
    <property type="project" value="UniProtKB-UniPathway"/>
</dbReference>
<dbReference type="GO" id="GO:0009254">
    <property type="term" value="P:peptidoglycan turnover"/>
    <property type="evidence" value="ECO:0007669"/>
    <property type="project" value="TreeGrafter"/>
</dbReference>
<dbReference type="CDD" id="cd05007">
    <property type="entry name" value="SIS_Etherase"/>
    <property type="match status" value="1"/>
</dbReference>
<dbReference type="FunFam" id="1.10.8.1080:FF:000001">
    <property type="entry name" value="N-acetylmuramic acid 6-phosphate etherase"/>
    <property type="match status" value="1"/>
</dbReference>
<dbReference type="FunFam" id="3.40.50.10490:FF:000014">
    <property type="entry name" value="N-acetylmuramic acid 6-phosphate etherase"/>
    <property type="match status" value="1"/>
</dbReference>
<dbReference type="Gene3D" id="1.10.8.1080">
    <property type="match status" value="1"/>
</dbReference>
<dbReference type="Gene3D" id="3.40.50.10490">
    <property type="entry name" value="Glucose-6-phosphate isomerase like protein, domain 1"/>
    <property type="match status" value="1"/>
</dbReference>
<dbReference type="HAMAP" id="MF_00068">
    <property type="entry name" value="MurQ"/>
    <property type="match status" value="1"/>
</dbReference>
<dbReference type="InterPro" id="IPR005488">
    <property type="entry name" value="Etherase_MurQ"/>
</dbReference>
<dbReference type="InterPro" id="IPR005486">
    <property type="entry name" value="Glucokinase_regulatory_CS"/>
</dbReference>
<dbReference type="InterPro" id="IPR040190">
    <property type="entry name" value="MURQ/GCKR"/>
</dbReference>
<dbReference type="InterPro" id="IPR001347">
    <property type="entry name" value="SIS_dom"/>
</dbReference>
<dbReference type="InterPro" id="IPR046348">
    <property type="entry name" value="SIS_dom_sf"/>
</dbReference>
<dbReference type="NCBIfam" id="TIGR00274">
    <property type="entry name" value="N-acetylmuramic acid 6-phosphate etherase"/>
    <property type="match status" value="1"/>
</dbReference>
<dbReference type="NCBIfam" id="NF003915">
    <property type="entry name" value="PRK05441.1"/>
    <property type="match status" value="1"/>
</dbReference>
<dbReference type="NCBIfam" id="NF009222">
    <property type="entry name" value="PRK12570.1"/>
    <property type="match status" value="1"/>
</dbReference>
<dbReference type="PANTHER" id="PTHR10088">
    <property type="entry name" value="GLUCOKINASE REGULATORY PROTEIN"/>
    <property type="match status" value="1"/>
</dbReference>
<dbReference type="PANTHER" id="PTHR10088:SF4">
    <property type="entry name" value="GLUCOKINASE REGULATORY PROTEIN"/>
    <property type="match status" value="1"/>
</dbReference>
<dbReference type="Pfam" id="PF22645">
    <property type="entry name" value="GKRP_SIS_N"/>
    <property type="match status" value="1"/>
</dbReference>
<dbReference type="SUPFAM" id="SSF53697">
    <property type="entry name" value="SIS domain"/>
    <property type="match status" value="1"/>
</dbReference>
<dbReference type="PROSITE" id="PS01272">
    <property type="entry name" value="GCKR"/>
    <property type="match status" value="1"/>
</dbReference>
<dbReference type="PROSITE" id="PS51464">
    <property type="entry name" value="SIS"/>
    <property type="match status" value="1"/>
</dbReference>